<geneLocation type="mitochondrion"/>
<feature type="chain" id="PRO_0000061199" description="Cytochrome b">
    <location>
        <begin position="1"/>
        <end position="382"/>
    </location>
</feature>
<feature type="transmembrane region" description="Helical" evidence="2">
    <location>
        <begin position="33"/>
        <end position="53"/>
    </location>
</feature>
<feature type="transmembrane region" description="Helical" evidence="2">
    <location>
        <begin position="77"/>
        <end position="98"/>
    </location>
</feature>
<feature type="transmembrane region" description="Helical" evidence="2">
    <location>
        <begin position="113"/>
        <end position="133"/>
    </location>
</feature>
<feature type="transmembrane region" description="Helical" evidence="2">
    <location>
        <begin position="178"/>
        <end position="198"/>
    </location>
</feature>
<feature type="transmembrane region" description="Helical" evidence="2">
    <location>
        <begin position="226"/>
        <end position="246"/>
    </location>
</feature>
<feature type="transmembrane region" description="Helical" evidence="2">
    <location>
        <begin position="288"/>
        <end position="308"/>
    </location>
</feature>
<feature type="transmembrane region" description="Helical" evidence="2">
    <location>
        <begin position="320"/>
        <end position="340"/>
    </location>
</feature>
<feature type="transmembrane region" description="Helical" evidence="2">
    <location>
        <begin position="347"/>
        <end position="367"/>
    </location>
</feature>
<feature type="binding site" description="axial binding residue" evidence="2">
    <location>
        <position position="83"/>
    </location>
    <ligand>
        <name>heme b</name>
        <dbReference type="ChEBI" id="CHEBI:60344"/>
        <label>b562</label>
    </ligand>
    <ligandPart>
        <name>Fe</name>
        <dbReference type="ChEBI" id="CHEBI:18248"/>
    </ligandPart>
</feature>
<feature type="binding site" description="axial binding residue" evidence="2">
    <location>
        <position position="97"/>
    </location>
    <ligand>
        <name>heme b</name>
        <dbReference type="ChEBI" id="CHEBI:60344"/>
        <label>b566</label>
    </ligand>
    <ligandPart>
        <name>Fe</name>
        <dbReference type="ChEBI" id="CHEBI:18248"/>
    </ligandPart>
</feature>
<feature type="binding site" description="axial binding residue" evidence="2">
    <location>
        <position position="182"/>
    </location>
    <ligand>
        <name>heme b</name>
        <dbReference type="ChEBI" id="CHEBI:60344"/>
        <label>b562</label>
    </ligand>
    <ligandPart>
        <name>Fe</name>
        <dbReference type="ChEBI" id="CHEBI:18248"/>
    </ligandPart>
</feature>
<feature type="binding site" description="axial binding residue" evidence="2">
    <location>
        <position position="196"/>
    </location>
    <ligand>
        <name>heme b</name>
        <dbReference type="ChEBI" id="CHEBI:60344"/>
        <label>b566</label>
    </ligand>
    <ligandPart>
        <name>Fe</name>
        <dbReference type="ChEBI" id="CHEBI:18248"/>
    </ligandPart>
</feature>
<feature type="binding site" evidence="2">
    <location>
        <position position="201"/>
    </location>
    <ligand>
        <name>a ubiquinone</name>
        <dbReference type="ChEBI" id="CHEBI:16389"/>
    </ligand>
</feature>
<reference key="1">
    <citation type="journal article" date="1996" name="J. Mammal. Evol.">
        <title>Relationships among didelphid marsupials based on sequence variation in the mitochondrial cytochrome b gene.</title>
        <authorList>
            <person name="Patton J.L."/>
            <person name="dos Reis Maria S.F."/>
            <person name="da Silva N.F."/>
        </authorList>
    </citation>
    <scope>NUCLEOTIDE SEQUENCE [GENOMIC DNA]</scope>
</reference>
<gene>
    <name type="primary">MT-CYB</name>
    <name type="synonym">COB</name>
    <name type="synonym">CYTB</name>
    <name type="synonym">MTCYB</name>
</gene>
<accession>Q34957</accession>
<organism>
    <name type="scientific">Monodelphis adusta</name>
    <name type="common">Sepia short-tailed opossum</name>
    <dbReference type="NCBI Taxonomy" id="42726"/>
    <lineage>
        <taxon>Eukaryota</taxon>
        <taxon>Metazoa</taxon>
        <taxon>Chordata</taxon>
        <taxon>Craniata</taxon>
        <taxon>Vertebrata</taxon>
        <taxon>Euteleostomi</taxon>
        <taxon>Mammalia</taxon>
        <taxon>Metatheria</taxon>
        <taxon>Didelphimorphia</taxon>
        <taxon>Didelphidae</taxon>
        <taxon>Monodelphis</taxon>
    </lineage>
</organism>
<protein>
    <recommendedName>
        <fullName>Cytochrome b</fullName>
    </recommendedName>
    <alternativeName>
        <fullName>Complex III subunit 3</fullName>
    </alternativeName>
    <alternativeName>
        <fullName>Complex III subunit III</fullName>
    </alternativeName>
    <alternativeName>
        <fullName>Cytochrome b-c1 complex subunit 3</fullName>
    </alternativeName>
    <alternativeName>
        <fullName>Ubiquinol-cytochrome-c reductase complex cytochrome b subunit</fullName>
    </alternativeName>
</protein>
<name>CYB_MONAD</name>
<keyword id="KW-0249">Electron transport</keyword>
<keyword id="KW-0349">Heme</keyword>
<keyword id="KW-0408">Iron</keyword>
<keyword id="KW-0472">Membrane</keyword>
<keyword id="KW-0479">Metal-binding</keyword>
<keyword id="KW-0496">Mitochondrion</keyword>
<keyword id="KW-0999">Mitochondrion inner membrane</keyword>
<keyword id="KW-0679">Respiratory chain</keyword>
<keyword id="KW-0812">Transmembrane</keyword>
<keyword id="KW-1133">Transmembrane helix</keyword>
<keyword id="KW-0813">Transport</keyword>
<keyword id="KW-0830">Ubiquinone</keyword>
<dbReference type="EMBL" id="U34676">
    <property type="protein sequence ID" value="AAA99750.1"/>
    <property type="molecule type" value="Genomic_DNA"/>
</dbReference>
<dbReference type="SMR" id="Q34957"/>
<dbReference type="GO" id="GO:0005743">
    <property type="term" value="C:mitochondrial inner membrane"/>
    <property type="evidence" value="ECO:0007669"/>
    <property type="project" value="UniProtKB-SubCell"/>
</dbReference>
<dbReference type="GO" id="GO:0045275">
    <property type="term" value="C:respiratory chain complex III"/>
    <property type="evidence" value="ECO:0007669"/>
    <property type="project" value="InterPro"/>
</dbReference>
<dbReference type="GO" id="GO:0046872">
    <property type="term" value="F:metal ion binding"/>
    <property type="evidence" value="ECO:0007669"/>
    <property type="project" value="UniProtKB-KW"/>
</dbReference>
<dbReference type="GO" id="GO:0008121">
    <property type="term" value="F:ubiquinol-cytochrome-c reductase activity"/>
    <property type="evidence" value="ECO:0007669"/>
    <property type="project" value="InterPro"/>
</dbReference>
<dbReference type="GO" id="GO:0006122">
    <property type="term" value="P:mitochondrial electron transport, ubiquinol to cytochrome c"/>
    <property type="evidence" value="ECO:0007669"/>
    <property type="project" value="TreeGrafter"/>
</dbReference>
<dbReference type="CDD" id="cd00290">
    <property type="entry name" value="cytochrome_b_C"/>
    <property type="match status" value="1"/>
</dbReference>
<dbReference type="CDD" id="cd00284">
    <property type="entry name" value="Cytochrome_b_N"/>
    <property type="match status" value="1"/>
</dbReference>
<dbReference type="FunFam" id="1.20.810.10:FF:000002">
    <property type="entry name" value="Cytochrome b"/>
    <property type="match status" value="1"/>
</dbReference>
<dbReference type="Gene3D" id="1.20.810.10">
    <property type="entry name" value="Cytochrome Bc1 Complex, Chain C"/>
    <property type="match status" value="1"/>
</dbReference>
<dbReference type="InterPro" id="IPR005798">
    <property type="entry name" value="Cyt_b/b6_C"/>
</dbReference>
<dbReference type="InterPro" id="IPR036150">
    <property type="entry name" value="Cyt_b/b6_C_sf"/>
</dbReference>
<dbReference type="InterPro" id="IPR005797">
    <property type="entry name" value="Cyt_b/b6_N"/>
</dbReference>
<dbReference type="InterPro" id="IPR027387">
    <property type="entry name" value="Cytb/b6-like_sf"/>
</dbReference>
<dbReference type="InterPro" id="IPR030689">
    <property type="entry name" value="Cytochrome_b"/>
</dbReference>
<dbReference type="InterPro" id="IPR048260">
    <property type="entry name" value="Cytochrome_b_C_euk/bac"/>
</dbReference>
<dbReference type="InterPro" id="IPR048259">
    <property type="entry name" value="Cytochrome_b_N_euk/bac"/>
</dbReference>
<dbReference type="InterPro" id="IPR016174">
    <property type="entry name" value="Di-haem_cyt_TM"/>
</dbReference>
<dbReference type="PANTHER" id="PTHR19271">
    <property type="entry name" value="CYTOCHROME B"/>
    <property type="match status" value="1"/>
</dbReference>
<dbReference type="PANTHER" id="PTHR19271:SF16">
    <property type="entry name" value="CYTOCHROME B"/>
    <property type="match status" value="1"/>
</dbReference>
<dbReference type="Pfam" id="PF00032">
    <property type="entry name" value="Cytochrom_B_C"/>
    <property type="match status" value="1"/>
</dbReference>
<dbReference type="Pfam" id="PF00033">
    <property type="entry name" value="Cytochrome_B"/>
    <property type="match status" value="1"/>
</dbReference>
<dbReference type="PIRSF" id="PIRSF038885">
    <property type="entry name" value="COB"/>
    <property type="match status" value="1"/>
</dbReference>
<dbReference type="SUPFAM" id="SSF81648">
    <property type="entry name" value="a domain/subunit of cytochrome bc1 complex (Ubiquinol-cytochrome c reductase)"/>
    <property type="match status" value="1"/>
</dbReference>
<dbReference type="SUPFAM" id="SSF81342">
    <property type="entry name" value="Transmembrane di-heme cytochromes"/>
    <property type="match status" value="1"/>
</dbReference>
<dbReference type="PROSITE" id="PS51003">
    <property type="entry name" value="CYTB_CTER"/>
    <property type="match status" value="1"/>
</dbReference>
<dbReference type="PROSITE" id="PS51002">
    <property type="entry name" value="CYTB_NTER"/>
    <property type="match status" value="1"/>
</dbReference>
<evidence type="ECO:0000250" key="1"/>
<evidence type="ECO:0000250" key="2">
    <source>
        <dbReference type="UniProtKB" id="P00157"/>
    </source>
</evidence>
<evidence type="ECO:0000255" key="3">
    <source>
        <dbReference type="PROSITE-ProRule" id="PRU00967"/>
    </source>
</evidence>
<evidence type="ECO:0000255" key="4">
    <source>
        <dbReference type="PROSITE-ProRule" id="PRU00968"/>
    </source>
</evidence>
<sequence>MTNLRKTHPLMKIINHSFIDLPAPSNISAWWNFGSLLGICLIIQILTGLFLAMHYTSDTLTAFSSVAHICRDVNYGWLIRNLHANGASMFFMCLFLHVGRGIYYGSYLFKETWNIGVILLLTVMATAFVGYVLPWGQMSFWGATVITNLLSAIPYIGSTLVEWIWGGFSVDKATLTRFFAFHFILPFIIMALVIVHLLFLHETGSSNPTGINPDSDKIPFHPYYTIKDALGLILMILILMSLAMFSPDMLGDPDNFTPANPLNTPPHIKPEWYFLFAYAILRSIPNKLGGVLALLASILVLLIIPLLHTSKQRSLMFRPISQVLFWMLTANLLTLTWIGGQPVEQPFIIIGQLASILYFSLIIIFMPLAGMLEDYMLEPKFP</sequence>
<comment type="function">
    <text evidence="2">Component of the ubiquinol-cytochrome c reductase complex (complex III or cytochrome b-c1 complex) that is part of the mitochondrial respiratory chain. The b-c1 complex mediates electron transfer from ubiquinol to cytochrome c. Contributes to the generation of a proton gradient across the mitochondrial membrane that is then used for ATP synthesis.</text>
</comment>
<comment type="cofactor">
    <cofactor evidence="2">
        <name>heme b</name>
        <dbReference type="ChEBI" id="CHEBI:60344"/>
    </cofactor>
    <text evidence="2">Binds 2 heme b groups non-covalently.</text>
</comment>
<comment type="subunit">
    <text evidence="2">The cytochrome bc1 complex contains 11 subunits: 3 respiratory subunits (MT-CYB, CYC1 and UQCRFS1), 2 core proteins (UQCRC1 and UQCRC2) and 6 low-molecular weight proteins (UQCRH/QCR6, UQCRB/QCR7, UQCRQ/QCR8, UQCR10/QCR9, UQCR11/QCR10 and a cleavage product of UQCRFS1). This cytochrome bc1 complex then forms a dimer.</text>
</comment>
<comment type="subcellular location">
    <subcellularLocation>
        <location evidence="2">Mitochondrion inner membrane</location>
        <topology evidence="2">Multi-pass membrane protein</topology>
    </subcellularLocation>
</comment>
<comment type="miscellaneous">
    <text evidence="1">Heme 1 (or BL or b562) is low-potential and absorbs at about 562 nm, and heme 2 (or BH or b566) is high-potential and absorbs at about 566 nm.</text>
</comment>
<comment type="similarity">
    <text evidence="3 4">Belongs to the cytochrome b family.</text>
</comment>
<comment type="caution">
    <text evidence="2">The full-length protein contains only eight transmembrane helices, not nine as predicted by bioinformatics tools.</text>
</comment>
<proteinExistence type="inferred from homology"/>